<accession>A2BP49</accession>
<proteinExistence type="inferred from homology"/>
<feature type="chain" id="PRO_1000010629" description="Peptidyl-tRNA hydrolase">
    <location>
        <begin position="1"/>
        <end position="200"/>
    </location>
</feature>
<feature type="active site" description="Proton acceptor" evidence="1">
    <location>
        <position position="21"/>
    </location>
</feature>
<feature type="binding site" evidence="1">
    <location>
        <position position="16"/>
    </location>
    <ligand>
        <name>tRNA</name>
        <dbReference type="ChEBI" id="CHEBI:17843"/>
    </ligand>
</feature>
<feature type="binding site" evidence="1">
    <location>
        <position position="67"/>
    </location>
    <ligand>
        <name>tRNA</name>
        <dbReference type="ChEBI" id="CHEBI:17843"/>
    </ligand>
</feature>
<feature type="binding site" evidence="1">
    <location>
        <position position="69"/>
    </location>
    <ligand>
        <name>tRNA</name>
        <dbReference type="ChEBI" id="CHEBI:17843"/>
    </ligand>
</feature>
<feature type="binding site" evidence="1">
    <location>
        <position position="115"/>
    </location>
    <ligand>
        <name>tRNA</name>
        <dbReference type="ChEBI" id="CHEBI:17843"/>
    </ligand>
</feature>
<feature type="site" description="Discriminates between blocked and unblocked aminoacyl-tRNA" evidence="1">
    <location>
        <position position="11"/>
    </location>
</feature>
<feature type="site" description="Stabilizes the basic form of H active site to accept a proton" evidence="1">
    <location>
        <position position="94"/>
    </location>
</feature>
<organism>
    <name type="scientific">Prochlorococcus marinus (strain AS9601)</name>
    <dbReference type="NCBI Taxonomy" id="146891"/>
    <lineage>
        <taxon>Bacteria</taxon>
        <taxon>Bacillati</taxon>
        <taxon>Cyanobacteriota</taxon>
        <taxon>Cyanophyceae</taxon>
        <taxon>Synechococcales</taxon>
        <taxon>Prochlorococcaceae</taxon>
        <taxon>Prochlorococcus</taxon>
    </lineage>
</organism>
<dbReference type="EC" id="3.1.1.29" evidence="1"/>
<dbReference type="EMBL" id="CP000551">
    <property type="protein sequence ID" value="ABM69560.1"/>
    <property type="molecule type" value="Genomic_DNA"/>
</dbReference>
<dbReference type="RefSeq" id="WP_011817744.1">
    <property type="nucleotide sequence ID" value="NC_008816.1"/>
</dbReference>
<dbReference type="SMR" id="A2BP49"/>
<dbReference type="STRING" id="146891.A9601_02721"/>
<dbReference type="KEGG" id="pmb:A9601_02721"/>
<dbReference type="eggNOG" id="COG0193">
    <property type="taxonomic scope" value="Bacteria"/>
</dbReference>
<dbReference type="HOGENOM" id="CLU_062456_4_1_3"/>
<dbReference type="OrthoDB" id="9800507at2"/>
<dbReference type="Proteomes" id="UP000002590">
    <property type="component" value="Chromosome"/>
</dbReference>
<dbReference type="GO" id="GO:0005737">
    <property type="term" value="C:cytoplasm"/>
    <property type="evidence" value="ECO:0007669"/>
    <property type="project" value="UniProtKB-SubCell"/>
</dbReference>
<dbReference type="GO" id="GO:0004045">
    <property type="term" value="F:peptidyl-tRNA hydrolase activity"/>
    <property type="evidence" value="ECO:0007669"/>
    <property type="project" value="UniProtKB-UniRule"/>
</dbReference>
<dbReference type="GO" id="GO:0000049">
    <property type="term" value="F:tRNA binding"/>
    <property type="evidence" value="ECO:0007669"/>
    <property type="project" value="UniProtKB-UniRule"/>
</dbReference>
<dbReference type="GO" id="GO:0006515">
    <property type="term" value="P:protein quality control for misfolded or incompletely synthesized proteins"/>
    <property type="evidence" value="ECO:0007669"/>
    <property type="project" value="UniProtKB-UniRule"/>
</dbReference>
<dbReference type="GO" id="GO:0072344">
    <property type="term" value="P:rescue of stalled ribosome"/>
    <property type="evidence" value="ECO:0007669"/>
    <property type="project" value="UniProtKB-UniRule"/>
</dbReference>
<dbReference type="CDD" id="cd00462">
    <property type="entry name" value="PTH"/>
    <property type="match status" value="1"/>
</dbReference>
<dbReference type="FunFam" id="3.40.50.1470:FF:000001">
    <property type="entry name" value="Peptidyl-tRNA hydrolase"/>
    <property type="match status" value="1"/>
</dbReference>
<dbReference type="Gene3D" id="3.40.50.1470">
    <property type="entry name" value="Peptidyl-tRNA hydrolase"/>
    <property type="match status" value="1"/>
</dbReference>
<dbReference type="HAMAP" id="MF_00083">
    <property type="entry name" value="Pept_tRNA_hydro_bact"/>
    <property type="match status" value="1"/>
</dbReference>
<dbReference type="InterPro" id="IPR001328">
    <property type="entry name" value="Pept_tRNA_hydro"/>
</dbReference>
<dbReference type="InterPro" id="IPR018171">
    <property type="entry name" value="Pept_tRNA_hydro_CS"/>
</dbReference>
<dbReference type="InterPro" id="IPR036416">
    <property type="entry name" value="Pept_tRNA_hydro_sf"/>
</dbReference>
<dbReference type="NCBIfam" id="TIGR00447">
    <property type="entry name" value="pth"/>
    <property type="match status" value="1"/>
</dbReference>
<dbReference type="PANTHER" id="PTHR17224">
    <property type="entry name" value="PEPTIDYL-TRNA HYDROLASE"/>
    <property type="match status" value="1"/>
</dbReference>
<dbReference type="PANTHER" id="PTHR17224:SF1">
    <property type="entry name" value="PEPTIDYL-TRNA HYDROLASE"/>
    <property type="match status" value="1"/>
</dbReference>
<dbReference type="Pfam" id="PF01195">
    <property type="entry name" value="Pept_tRNA_hydro"/>
    <property type="match status" value="1"/>
</dbReference>
<dbReference type="SUPFAM" id="SSF53178">
    <property type="entry name" value="Peptidyl-tRNA hydrolase-like"/>
    <property type="match status" value="1"/>
</dbReference>
<dbReference type="PROSITE" id="PS01196">
    <property type="entry name" value="PEPT_TRNA_HYDROL_2"/>
    <property type="match status" value="1"/>
</dbReference>
<gene>
    <name evidence="1" type="primary">pth</name>
    <name type="ordered locus">A9601_02721</name>
</gene>
<sequence length="200" mass="22885">MNEIYLIGLGNPGKKYFNSRHNIGFLLLESFSKKYNSNFLLKDKLKSSCSEFQINNSTFKLFLPNTFMNNSGDAVRAIVDWYKINLDQILIIVDDKDLPLGKIRFRRKGSSGGHNGLKSIIEQLQTQNFKRIRIGIGSPPITNGKNHFNTISHVLGNISLDEKSILDKVYSRVIESLEQINTKKEEYIINELNSFDKDQP</sequence>
<protein>
    <recommendedName>
        <fullName evidence="1">Peptidyl-tRNA hydrolase</fullName>
        <shortName evidence="1">Pth</shortName>
        <ecNumber evidence="1">3.1.1.29</ecNumber>
    </recommendedName>
</protein>
<keyword id="KW-0963">Cytoplasm</keyword>
<keyword id="KW-0378">Hydrolase</keyword>
<keyword id="KW-0694">RNA-binding</keyword>
<keyword id="KW-0820">tRNA-binding</keyword>
<reference key="1">
    <citation type="journal article" date="2007" name="PLoS Genet.">
        <title>Patterns and implications of gene gain and loss in the evolution of Prochlorococcus.</title>
        <authorList>
            <person name="Kettler G.C."/>
            <person name="Martiny A.C."/>
            <person name="Huang K."/>
            <person name="Zucker J."/>
            <person name="Coleman M.L."/>
            <person name="Rodrigue S."/>
            <person name="Chen F."/>
            <person name="Lapidus A."/>
            <person name="Ferriera S."/>
            <person name="Johnson J."/>
            <person name="Steglich C."/>
            <person name="Church G.M."/>
            <person name="Richardson P."/>
            <person name="Chisholm S.W."/>
        </authorList>
    </citation>
    <scope>NUCLEOTIDE SEQUENCE [LARGE SCALE GENOMIC DNA]</scope>
    <source>
        <strain>AS9601</strain>
    </source>
</reference>
<evidence type="ECO:0000255" key="1">
    <source>
        <dbReference type="HAMAP-Rule" id="MF_00083"/>
    </source>
</evidence>
<name>PTH_PROMS</name>
<comment type="function">
    <text evidence="1">Hydrolyzes ribosome-free peptidyl-tRNAs (with 1 or more amino acids incorporated), which drop off the ribosome during protein synthesis, or as a result of ribosome stalling.</text>
</comment>
<comment type="function">
    <text evidence="1">Catalyzes the release of premature peptidyl moieties from peptidyl-tRNA molecules trapped in stalled 50S ribosomal subunits, and thus maintains levels of free tRNAs and 50S ribosomes.</text>
</comment>
<comment type="catalytic activity">
    <reaction evidence="1">
        <text>an N-acyl-L-alpha-aminoacyl-tRNA + H2O = an N-acyl-L-amino acid + a tRNA + H(+)</text>
        <dbReference type="Rhea" id="RHEA:54448"/>
        <dbReference type="Rhea" id="RHEA-COMP:10123"/>
        <dbReference type="Rhea" id="RHEA-COMP:13883"/>
        <dbReference type="ChEBI" id="CHEBI:15377"/>
        <dbReference type="ChEBI" id="CHEBI:15378"/>
        <dbReference type="ChEBI" id="CHEBI:59874"/>
        <dbReference type="ChEBI" id="CHEBI:78442"/>
        <dbReference type="ChEBI" id="CHEBI:138191"/>
        <dbReference type="EC" id="3.1.1.29"/>
    </reaction>
</comment>
<comment type="subunit">
    <text evidence="1">Monomer.</text>
</comment>
<comment type="subcellular location">
    <subcellularLocation>
        <location evidence="1">Cytoplasm</location>
    </subcellularLocation>
</comment>
<comment type="similarity">
    <text evidence="1">Belongs to the PTH family.</text>
</comment>